<accession>Q63563</accession>
<accession>O89115</accession>
<keyword id="KW-0002">3D-structure</keyword>
<keyword id="KW-0025">Alternative splicing</keyword>
<keyword id="KW-0067">ATP-binding</keyword>
<keyword id="KW-0325">Glycoprotein</keyword>
<keyword id="KW-0472">Membrane</keyword>
<keyword id="KW-0547">Nucleotide-binding</keyword>
<keyword id="KW-0675">Receptor</keyword>
<keyword id="KW-1185">Reference proteome</keyword>
<keyword id="KW-0677">Repeat</keyword>
<keyword id="KW-0812">Transmembrane</keyword>
<keyword id="KW-1133">Transmembrane helix</keyword>
<keyword id="KW-0813">Transport</keyword>
<feature type="chain" id="PRO_0000093405" description="ATP-binding cassette sub-family C member 9">
    <location>
        <begin position="1"/>
        <end position="1545"/>
    </location>
</feature>
<feature type="topological domain" description="Extracellular" evidence="3">
    <location>
        <begin position="1"/>
        <end position="30"/>
    </location>
</feature>
<feature type="transmembrane region" description="Helical; Name=1" evidence="5">
    <location>
        <begin position="31"/>
        <end position="51"/>
    </location>
</feature>
<feature type="topological domain" description="Cytoplasmic" evidence="3">
    <location>
        <begin position="52"/>
        <end position="72"/>
    </location>
</feature>
<feature type="transmembrane region" description="Helical; Name=2" evidence="5">
    <location>
        <begin position="73"/>
        <end position="93"/>
    </location>
</feature>
<feature type="topological domain" description="Extracellular" evidence="3">
    <location>
        <begin position="94"/>
        <end position="101"/>
    </location>
</feature>
<feature type="transmembrane region" description="Helical; Name=3" evidence="5">
    <location>
        <begin position="102"/>
        <end position="122"/>
    </location>
</feature>
<feature type="topological domain" description="Cytoplasmic" evidence="3">
    <location>
        <begin position="123"/>
        <end position="132"/>
    </location>
</feature>
<feature type="transmembrane region" description="Helical; Name=4" evidence="5">
    <location>
        <begin position="133"/>
        <end position="153"/>
    </location>
</feature>
<feature type="topological domain" description="Extracellular" evidence="3">
    <location>
        <begin position="154"/>
        <end position="167"/>
    </location>
</feature>
<feature type="transmembrane region" description="Helical; Name=5" evidence="5">
    <location>
        <begin position="168"/>
        <end position="188"/>
    </location>
</feature>
<feature type="topological domain" description="Cytoplasmic" evidence="3">
    <location>
        <begin position="189"/>
        <end position="301"/>
    </location>
</feature>
<feature type="transmembrane region" description="Helical; Name=6" evidence="5">
    <location>
        <begin position="302"/>
        <end position="322"/>
    </location>
</feature>
<feature type="topological domain" description="Extracellular" evidence="3">
    <location>
        <begin position="323"/>
        <end position="347"/>
    </location>
</feature>
<feature type="transmembrane region" description="Helical; Name=7" evidence="5">
    <location>
        <begin position="348"/>
        <end position="368"/>
    </location>
</feature>
<feature type="topological domain" description="Cytoplasmic" evidence="3">
    <location>
        <begin position="369"/>
        <end position="420"/>
    </location>
</feature>
<feature type="transmembrane region" description="Helical; Name=8" evidence="5">
    <location>
        <begin position="421"/>
        <end position="441"/>
    </location>
</feature>
<feature type="topological domain" description="Extracellular" evidence="3">
    <location>
        <begin position="442"/>
        <end position="452"/>
    </location>
</feature>
<feature type="transmembrane region" description="Helical; Name=9" evidence="5">
    <location>
        <begin position="453"/>
        <end position="473"/>
    </location>
</feature>
<feature type="topological domain" description="Cytoplasmic" evidence="3">
    <location>
        <begin position="474"/>
        <end position="528"/>
    </location>
</feature>
<feature type="transmembrane region" description="Helical; Name=10" evidence="5">
    <location>
        <begin position="529"/>
        <end position="549"/>
    </location>
</feature>
<feature type="topological domain" description="Extracellular" evidence="3">
    <location>
        <begin position="550"/>
        <end position="568"/>
    </location>
</feature>
<feature type="transmembrane region" description="Helical; Name=11" evidence="5">
    <location>
        <begin position="569"/>
        <end position="589"/>
    </location>
</feature>
<feature type="topological domain" description="Cytoplasmic" evidence="3">
    <location>
        <begin position="590"/>
        <end position="986"/>
    </location>
</feature>
<feature type="transmembrane region" description="Helical; Name=12" evidence="5">
    <location>
        <begin position="987"/>
        <end position="1007"/>
    </location>
</feature>
<feature type="topological domain" description="Extracellular" evidence="3">
    <location>
        <begin position="1008"/>
        <end position="1030"/>
    </location>
</feature>
<feature type="transmembrane region" description="Helical; Name=13" evidence="5">
    <location>
        <begin position="1031"/>
        <end position="1051"/>
    </location>
</feature>
<feature type="topological domain" description="Cytoplasmic" evidence="3">
    <location>
        <begin position="1052"/>
        <end position="1123"/>
    </location>
</feature>
<feature type="transmembrane region" description="Helical; Name=14" evidence="5">
    <location>
        <begin position="1124"/>
        <end position="1144"/>
    </location>
</feature>
<feature type="topological domain" description="Extracellular" evidence="3">
    <location>
        <begin position="1145"/>
        <end position="1241"/>
    </location>
</feature>
<feature type="transmembrane region" description="Helical; Name=15" evidence="5">
    <location>
        <begin position="1242"/>
        <end position="1262"/>
    </location>
</feature>
<feature type="topological domain" description="Cytoplasmic" evidence="3">
    <location>
        <begin position="1263"/>
        <end position="1545"/>
    </location>
</feature>
<feature type="domain" description="ABC transmembrane type-1 1" evidence="5">
    <location>
        <begin position="297"/>
        <end position="594"/>
    </location>
</feature>
<feature type="domain" description="ABC transporter 1" evidence="4">
    <location>
        <begin position="668"/>
        <end position="908"/>
    </location>
</feature>
<feature type="domain" description="ABC transmembrane type-1 2" evidence="5">
    <location>
        <begin position="990"/>
        <end position="1270"/>
    </location>
</feature>
<feature type="domain" description="ABC transporter 2" evidence="4">
    <location>
        <begin position="1308"/>
        <end position="1542"/>
    </location>
</feature>
<feature type="region of interest" description="Disordered" evidence="6">
    <location>
        <begin position="940"/>
        <end position="963"/>
    </location>
</feature>
<feature type="compositionally biased region" description="Acidic residues" evidence="6">
    <location>
        <begin position="947"/>
        <end position="962"/>
    </location>
</feature>
<feature type="binding site" evidence="4">
    <location>
        <begin position="701"/>
        <end position="708"/>
    </location>
    <ligand>
        <name>ATP</name>
        <dbReference type="ChEBI" id="CHEBI:30616"/>
        <label>1</label>
    </ligand>
</feature>
<feature type="binding site" evidence="4">
    <location>
        <begin position="1342"/>
        <end position="1349"/>
    </location>
    <ligand>
        <name>ATP</name>
        <dbReference type="ChEBI" id="CHEBI:30616"/>
        <label>2</label>
    </ligand>
</feature>
<feature type="glycosylation site" description="N-linked (GlcNAc...) asparagine" evidence="3">
    <location>
        <position position="9"/>
    </location>
</feature>
<feature type="glycosylation site" description="N-linked (GlcNAc...) asparagine" evidence="3">
    <location>
        <position position="330"/>
    </location>
</feature>
<feature type="glycosylation site" description="N-linked (GlcNAc...) asparagine" evidence="3">
    <location>
        <position position="331"/>
    </location>
</feature>
<feature type="splice variant" id="VSP_000061" description="In isoform SUR2B." evidence="7 8">
    <original>SSIMDAGLVLVFSEGILVECDTGPNLLQHKNGLFSTLVMTNK</original>
    <variation>HTILTADLVIVMKRGNILEYDTPESLLAQEDGVFASFVRADM</variation>
    <location>
        <begin position="1504"/>
        <end position="1545"/>
    </location>
</feature>
<feature type="helix" evidence="10">
    <location>
        <begin position="10"/>
        <end position="13"/>
    </location>
</feature>
<feature type="helix" evidence="10">
    <location>
        <begin position="23"/>
        <end position="47"/>
    </location>
</feature>
<feature type="turn" evidence="10">
    <location>
        <begin position="57"/>
        <end position="59"/>
    </location>
</feature>
<feature type="strand" evidence="10">
    <location>
        <begin position="67"/>
        <end position="69"/>
    </location>
</feature>
<feature type="helix" evidence="10">
    <location>
        <begin position="70"/>
        <end position="95"/>
    </location>
</feature>
<feature type="strand" evidence="10">
    <location>
        <begin position="97"/>
        <end position="99"/>
    </location>
</feature>
<feature type="turn" evidence="10">
    <location>
        <begin position="102"/>
        <end position="105"/>
    </location>
</feature>
<feature type="helix" evidence="10">
    <location>
        <begin position="106"/>
        <end position="127"/>
    </location>
</feature>
<feature type="helix" evidence="10">
    <location>
        <begin position="131"/>
        <end position="134"/>
    </location>
</feature>
<feature type="helix" evidence="10">
    <location>
        <begin position="135"/>
        <end position="157"/>
    </location>
</feature>
<feature type="helix" evidence="10">
    <location>
        <begin position="165"/>
        <end position="191"/>
    </location>
</feature>
<feature type="helix" evidence="10">
    <location>
        <begin position="206"/>
        <end position="209"/>
    </location>
</feature>
<feature type="helix" evidence="13">
    <location>
        <begin position="217"/>
        <end position="226"/>
    </location>
</feature>
<feature type="helix" evidence="13">
    <location>
        <begin position="229"/>
        <end position="231"/>
    </location>
</feature>
<feature type="helix" evidence="13">
    <location>
        <begin position="232"/>
        <end position="240"/>
    </location>
</feature>
<feature type="turn" evidence="13">
    <location>
        <begin position="245"/>
        <end position="247"/>
    </location>
</feature>
<feature type="helix" evidence="13">
    <location>
        <begin position="253"/>
        <end position="255"/>
    </location>
</feature>
<feature type="helix" evidence="13">
    <location>
        <begin position="257"/>
        <end position="273"/>
    </location>
</feature>
<feature type="helix" evidence="13">
    <location>
        <begin position="285"/>
        <end position="292"/>
    </location>
</feature>
<feature type="helix" evidence="13">
    <location>
        <begin position="295"/>
        <end position="311"/>
    </location>
</feature>
<feature type="helix" evidence="13">
    <location>
        <begin position="313"/>
        <end position="323"/>
    </location>
</feature>
<feature type="turn" evidence="10">
    <location>
        <begin position="341"/>
        <end position="343"/>
    </location>
</feature>
<feature type="helix" evidence="13">
    <location>
        <begin position="344"/>
        <end position="346"/>
    </location>
</feature>
<feature type="helix" evidence="13">
    <location>
        <begin position="348"/>
        <end position="394"/>
    </location>
</feature>
<feature type="turn" evidence="13">
    <location>
        <begin position="399"/>
        <end position="401"/>
    </location>
</feature>
<feature type="helix" evidence="13">
    <location>
        <begin position="406"/>
        <end position="415"/>
    </location>
</feature>
<feature type="helix" evidence="13">
    <location>
        <begin position="417"/>
        <end position="449"/>
    </location>
</feature>
<feature type="helix" evidence="13">
    <location>
        <begin position="452"/>
        <end position="461"/>
    </location>
</feature>
<feature type="helix" evidence="13">
    <location>
        <begin position="463"/>
        <end position="496"/>
    </location>
</feature>
<feature type="helix" evidence="13">
    <location>
        <begin position="499"/>
        <end position="505"/>
    </location>
</feature>
<feature type="helix" evidence="13">
    <location>
        <begin position="508"/>
        <end position="557"/>
    </location>
</feature>
<feature type="strand" evidence="13">
    <location>
        <begin position="559"/>
        <end position="561"/>
    </location>
</feature>
<feature type="helix" evidence="13">
    <location>
        <begin position="565"/>
        <end position="606"/>
    </location>
</feature>
<feature type="strand" evidence="10">
    <location>
        <begin position="613"/>
        <end position="616"/>
    </location>
</feature>
<feature type="strand" evidence="13">
    <location>
        <begin position="666"/>
        <end position="692"/>
    </location>
</feature>
<feature type="strand" evidence="13">
    <location>
        <begin position="695"/>
        <end position="700"/>
    </location>
</feature>
<feature type="strand" evidence="12">
    <location>
        <begin position="703"/>
        <end position="706"/>
    </location>
</feature>
<feature type="helix" evidence="13">
    <location>
        <begin position="707"/>
        <end position="714"/>
    </location>
</feature>
<feature type="strand" evidence="13">
    <location>
        <begin position="718"/>
        <end position="727"/>
    </location>
</feature>
<feature type="strand" evidence="13">
    <location>
        <begin position="748"/>
        <end position="751"/>
    </location>
</feature>
<feature type="strand" evidence="13">
    <location>
        <begin position="759"/>
        <end position="761"/>
    </location>
</feature>
<feature type="helix" evidence="13">
    <location>
        <begin position="762"/>
        <end position="767"/>
    </location>
</feature>
<feature type="strand" evidence="13">
    <location>
        <begin position="768"/>
        <end position="770"/>
    </location>
</feature>
<feature type="helix" evidence="13">
    <location>
        <begin position="774"/>
        <end position="783"/>
    </location>
</feature>
<feature type="helix" evidence="13">
    <location>
        <begin position="787"/>
        <end position="791"/>
    </location>
</feature>
<feature type="strand" evidence="13">
    <location>
        <begin position="793"/>
        <end position="795"/>
    </location>
</feature>
<feature type="helix" evidence="13">
    <location>
        <begin position="796"/>
        <end position="798"/>
    </location>
</feature>
<feature type="strand" evidence="13">
    <location>
        <begin position="800"/>
        <end position="806"/>
    </location>
</feature>
<feature type="helix" evidence="13">
    <location>
        <begin position="810"/>
        <end position="823"/>
    </location>
</feature>
<feature type="strand" evidence="13">
    <location>
        <begin position="827"/>
        <end position="833"/>
    </location>
</feature>
<feature type="turn" evidence="13">
    <location>
        <begin position="834"/>
        <end position="837"/>
    </location>
</feature>
<feature type="helix" evidence="13">
    <location>
        <begin position="840"/>
        <end position="849"/>
    </location>
</feature>
<feature type="turn" evidence="13">
    <location>
        <begin position="850"/>
        <end position="853"/>
    </location>
</feature>
<feature type="helix" evidence="13">
    <location>
        <begin position="854"/>
        <end position="857"/>
    </location>
</feature>
<feature type="strand" evidence="13">
    <location>
        <begin position="861"/>
        <end position="865"/>
    </location>
</feature>
<feature type="helix" evidence="13">
    <location>
        <begin position="869"/>
        <end position="874"/>
    </location>
</feature>
<feature type="strand" evidence="13">
    <location>
        <begin position="876"/>
        <end position="890"/>
    </location>
</feature>
<feature type="helix" evidence="13">
    <location>
        <begin position="892"/>
        <end position="898"/>
    </location>
</feature>
<feature type="helix" evidence="13">
    <location>
        <begin position="900"/>
        <end position="920"/>
    </location>
</feature>
<feature type="helix" evidence="13">
    <location>
        <begin position="925"/>
        <end position="936"/>
    </location>
</feature>
<feature type="turn" evidence="10">
    <location>
        <begin position="962"/>
        <end position="965"/>
    </location>
</feature>
<feature type="helix" evidence="13">
    <location>
        <begin position="967"/>
        <end position="970"/>
    </location>
</feature>
<feature type="helix" evidence="13">
    <location>
        <begin position="975"/>
        <end position="983"/>
    </location>
</feature>
<feature type="helix" evidence="13">
    <location>
        <begin position="987"/>
        <end position="1015"/>
    </location>
</feature>
<feature type="helix" evidence="13">
    <location>
        <begin position="1029"/>
        <end position="1073"/>
    </location>
</feature>
<feature type="helix" evidence="13">
    <location>
        <begin position="1077"/>
        <end position="1082"/>
    </location>
</feature>
<feature type="helix" evidence="13">
    <location>
        <begin position="1085"/>
        <end position="1101"/>
    </location>
</feature>
<feature type="helix" evidence="13">
    <location>
        <begin position="1103"/>
        <end position="1127"/>
    </location>
</feature>
<feature type="helix" evidence="13">
    <location>
        <begin position="1131"/>
        <end position="1175"/>
    </location>
</feature>
<feature type="helix" evidence="13">
    <location>
        <begin position="1178"/>
        <end position="1184"/>
    </location>
</feature>
<feature type="helix" evidence="13">
    <location>
        <begin position="1187"/>
        <end position="1236"/>
    </location>
</feature>
<feature type="helix" evidence="13">
    <location>
        <begin position="1241"/>
        <end position="1282"/>
    </location>
</feature>
<feature type="turn" evidence="13">
    <location>
        <begin position="1295"/>
        <end position="1297"/>
    </location>
</feature>
<feature type="turn" evidence="11">
    <location>
        <begin position="1300"/>
        <end position="1303"/>
    </location>
</feature>
<feature type="strand" evidence="13">
    <location>
        <begin position="1308"/>
        <end position="1318"/>
    </location>
</feature>
<feature type="strand" evidence="13">
    <location>
        <begin position="1324"/>
        <end position="1332"/>
    </location>
</feature>
<feature type="strand" evidence="13">
    <location>
        <begin position="1338"/>
        <end position="1343"/>
    </location>
</feature>
<feature type="strand" evidence="13">
    <location>
        <begin position="1346"/>
        <end position="1348"/>
    </location>
</feature>
<feature type="helix" evidence="13">
    <location>
        <begin position="1349"/>
        <end position="1355"/>
    </location>
</feature>
<feature type="strand" evidence="13">
    <location>
        <begin position="1359"/>
        <end position="1368"/>
    </location>
</feature>
<feature type="turn" evidence="12">
    <location>
        <begin position="1373"/>
        <end position="1375"/>
    </location>
</feature>
<feature type="helix" evidence="13">
    <location>
        <begin position="1378"/>
        <end position="1383"/>
    </location>
</feature>
<feature type="strand" evidence="13">
    <location>
        <begin position="1385"/>
        <end position="1388"/>
    </location>
</feature>
<feature type="strand" evidence="13">
    <location>
        <begin position="1396"/>
        <end position="1398"/>
    </location>
</feature>
<feature type="helix" evidence="13">
    <location>
        <begin position="1399"/>
        <end position="1403"/>
    </location>
</feature>
<feature type="helix" evidence="13">
    <location>
        <begin position="1411"/>
        <end position="1420"/>
    </location>
</feature>
<feature type="helix" evidence="13">
    <location>
        <begin position="1424"/>
        <end position="1429"/>
    </location>
</feature>
<feature type="helix" evidence="13">
    <location>
        <begin position="1433"/>
        <end position="1435"/>
    </location>
</feature>
<feature type="helix" evidence="12">
    <location>
        <begin position="1440"/>
        <end position="1442"/>
    </location>
</feature>
<feature type="helix" evidence="13">
    <location>
        <begin position="1447"/>
        <end position="1461"/>
    </location>
</feature>
<feature type="strand" evidence="13">
    <location>
        <begin position="1464"/>
        <end position="1470"/>
    </location>
</feature>
<feature type="turn" evidence="13">
    <location>
        <begin position="1471"/>
        <end position="1474"/>
    </location>
</feature>
<feature type="helix" evidence="13">
    <location>
        <begin position="1477"/>
        <end position="1490"/>
    </location>
</feature>
<feature type="strand" evidence="13">
    <location>
        <begin position="1492"/>
        <end position="1499"/>
    </location>
</feature>
<feature type="helix" evidence="13">
    <location>
        <begin position="1503"/>
        <end position="1506"/>
    </location>
</feature>
<feature type="strand" evidence="13">
    <location>
        <begin position="1510"/>
        <end position="1516"/>
    </location>
</feature>
<feature type="strand" evidence="13">
    <location>
        <begin position="1519"/>
        <end position="1524"/>
    </location>
</feature>
<feature type="helix" evidence="13">
    <location>
        <begin position="1526"/>
        <end position="1531"/>
    </location>
</feature>
<feature type="helix" evidence="13">
    <location>
        <begin position="1536"/>
        <end position="1541"/>
    </location>
</feature>
<comment type="function">
    <text evidence="1 2">Subunit of ATP-sensitive potassium channels (KATP). Can form cardiac and smooth muscle-type KATP channels with KCNJ11. KCNJ11 forms the channel pore while ABCC9 is required for activation and regulation. Can form a sulfonylurea-sensitive but ATP-insensitive potassium channel with KCNJ8.</text>
</comment>
<comment type="subunit">
    <text evidence="1 2">Interacts with KCNJ11. Interacts with KCNJ8.</text>
</comment>
<comment type="interaction">
    <interactant intactId="EBI-8282518">
        <id>Q63563-2</id>
    </interactant>
    <interactant intactId="EBI-8282518">
        <id>Q63563-2</id>
        <label>Abcc9</label>
    </interactant>
    <organismsDiffer>false</organismsDiffer>
    <experiments>2</experiments>
</comment>
<comment type="subcellular location">
    <subcellularLocation>
        <location evidence="5">Membrane</location>
        <topology evidence="5">Multi-pass membrane protein</topology>
    </subcellularLocation>
</comment>
<comment type="alternative products">
    <event type="alternative splicing"/>
    <isoform>
        <id>Q63563-1</id>
        <name>SUR2A</name>
        <sequence type="displayed"/>
    </isoform>
    <isoform>
        <id>Q63563-2</id>
        <name>SUR2B</name>
        <sequence type="described" ref="VSP_000061"/>
    </isoform>
</comment>
<comment type="tissue specificity">
    <text>Expressed at high levels in heart, skeletal muscle and ovary. Moderate levels are found in brain, tongue and pancreatic islets. Low levels are found in lung, testis and adrenal gland. Expressed at very low levels in stomach, colon, thyroid and pituitary.</text>
</comment>
<comment type="similarity">
    <text evidence="9">Belongs to the ABC transporter superfamily. ABCC family. Conjugate transporter (TC 3.A.1.208) subfamily.</text>
</comment>
<name>ABCC9_RAT</name>
<sequence>MSLSFCGNNISSYNIYHGVLQNPCFVDALNLVPHVFLLFITFPILFIGWGSQSSKVQIHHNTWLHFPGHNLRWILTFALLFVHVCEIAEGIVSDSQRASRHLHLFMPAVMGFVATTTSIVYYHNIETSNFPKLLLALFLYWVMAFITKTIKLVKYWQLGWGMSDLRFCITGVMVILNGLLMAVEINVIRVRRYVFFMNPQKVKPPEDLQDLGVRFLQPFVNLLSKATYWWMNTLIISAHRKPIDLKAIGKLPIAMRAVTNYVCLKEAYEEQKKKAADHPNRTPSIWLAMYRAFGRPILLSSTFRYLADLLGFAGPLCISGIVQRVNEPKNNTTRFSETLSSKEFLENAHVLAVLLFLALILQRTFLQASYYVTIETGINLRGALLAMIYNKILRLSTSNLSMGEMTLGQINNLVAIETNQLMWFLFLCPNLWAMPVQIIMGVILLYNLLGSSALVGAAVIVLLAPIQYFIATKLAEAQKSTLDYSTERLKKTNEILKGIKLLKLYAWEHIFCKSVEETRMKELSSLKTFALYTSLSIFMNAAIPIAAVLATFVTHAYASGNNLKPAEAFASLSLFHILVTPLFLLSTVVRFAVKAIISVQKLNEFLLSDEIGEDSWRTGEGTLPFESCKKHTGVQSKPINRKQPGRYHLDNYEQARRLRPAETEDVAIKVTNGYFSWGSGLATLSNIDIRIPTGQLTMIVGQVGCGKSSLLLAILGEMQTLEGKVYWNNVNESEPSFEATRSRSRYSVAYAAQKPWLLNATVEENITFGSSFNRQRYKAVTDACSLQPDIDLLPFGDQTEIGERGINLSGGQRQRICVARALYQNTNIVFLDDPFSALDIHLSDHLMQEGILKFLQDDKRTVVLVTHKLQYLTHADWIIAMKDGSVLREGTLKDIQTKDVELYEHWKTLMNRQDQELEKDMEADQTTLERKTLRRAMYSREAKAQMEDEDEEEEEEEDEDDNMSTVMRLRTKMPWKTCWWYLTSGGFFLLFLMIFSKLLKHSVIVAIDYWLATWTSEYSINDPGKADQTFYVAGFSILCGAGIFLCLVTSLTVEWMGLTAAKNLHHNLLNKIILGPIRFFDTTPLGLILNRFSADTNIIDQHIPPTLESLTRSTLLCLSAIGMISYATPVFLIALAPLGVAFYFIQKYFRVASKDLQELDDSTQLPLLCHFSETAEGLTTIRAFRHETRFKQRMLELTDTNNIAYLFLSAANRWLEVRTDYLGACIVLTASIASISGSSNSGLVGLGLLYALTITNYLNWVVRNLADLEVQMGAVKKVNSFLTMESENYEGTMDPSQVPEHWPQEGEIKIHDLCVRYENNLKPVLKHVKAYIKPGQKVGICGRTGSGKSSLSLAFFRMVDIFDGKIVIDGIDISKLPLHTLRSRLSIILQDPILFSGSIRFNLDPECKCTDDRLWEALEIAQLKNMVKSLPGGLDATVTEGGENFSVGQRQLFCLARAFVRKSSILIMDEATASIDMATENILQKVVMTAFADRTVVTIAHRVSSIMDAGLVLVFSEGILVECDTGPNLLQHKNGLFSTLVMTNK</sequence>
<organism>
    <name type="scientific">Rattus norvegicus</name>
    <name type="common">Rat</name>
    <dbReference type="NCBI Taxonomy" id="10116"/>
    <lineage>
        <taxon>Eukaryota</taxon>
        <taxon>Metazoa</taxon>
        <taxon>Chordata</taxon>
        <taxon>Craniata</taxon>
        <taxon>Vertebrata</taxon>
        <taxon>Euteleostomi</taxon>
        <taxon>Mammalia</taxon>
        <taxon>Eutheria</taxon>
        <taxon>Euarchontoglires</taxon>
        <taxon>Glires</taxon>
        <taxon>Rodentia</taxon>
        <taxon>Myomorpha</taxon>
        <taxon>Muroidea</taxon>
        <taxon>Muridae</taxon>
        <taxon>Murinae</taxon>
        <taxon>Rattus</taxon>
    </lineage>
</organism>
<protein>
    <recommendedName>
        <fullName>ATP-binding cassette sub-family C member 9</fullName>
    </recommendedName>
    <alternativeName>
        <fullName>Sulfonylurea receptor 2</fullName>
    </alternativeName>
</protein>
<evidence type="ECO:0000250" key="1">
    <source>
        <dbReference type="UniProtKB" id="O60706"/>
    </source>
</evidence>
<evidence type="ECO:0000250" key="2">
    <source>
        <dbReference type="UniProtKB" id="P70170"/>
    </source>
</evidence>
<evidence type="ECO:0000255" key="3"/>
<evidence type="ECO:0000255" key="4">
    <source>
        <dbReference type="PROSITE-ProRule" id="PRU00434"/>
    </source>
</evidence>
<evidence type="ECO:0000255" key="5">
    <source>
        <dbReference type="PROSITE-ProRule" id="PRU00441"/>
    </source>
</evidence>
<evidence type="ECO:0000256" key="6">
    <source>
        <dbReference type="SAM" id="MobiDB-lite"/>
    </source>
</evidence>
<evidence type="ECO:0000303" key="7">
    <source ref="2"/>
</evidence>
<evidence type="ECO:0000303" key="8">
    <source ref="3"/>
</evidence>
<evidence type="ECO:0000305" key="9"/>
<evidence type="ECO:0007829" key="10">
    <source>
        <dbReference type="PDB" id="7MIT"/>
    </source>
</evidence>
<evidence type="ECO:0007829" key="11">
    <source>
        <dbReference type="PDB" id="7VLS"/>
    </source>
</evidence>
<evidence type="ECO:0007829" key="12">
    <source>
        <dbReference type="PDB" id="7VLT"/>
    </source>
</evidence>
<evidence type="ECO:0007829" key="13">
    <source>
        <dbReference type="PDB" id="7Y1J"/>
    </source>
</evidence>
<dbReference type="EMBL" id="D83598">
    <property type="protein sequence ID" value="BAA12020.1"/>
    <property type="molecule type" value="mRNA"/>
</dbReference>
<dbReference type="EMBL" id="AF087838">
    <property type="protein sequence ID" value="AAC36347.1"/>
    <property type="molecule type" value="mRNA"/>
</dbReference>
<dbReference type="EMBL" id="AF019628">
    <property type="protein sequence ID" value="AAC24758.1"/>
    <property type="molecule type" value="mRNA"/>
</dbReference>
<dbReference type="PIR" id="T42751">
    <property type="entry name" value="T42751"/>
</dbReference>
<dbReference type="PIR" id="T46645">
    <property type="entry name" value="T46645"/>
</dbReference>
<dbReference type="RefSeq" id="NP_037172.2">
    <molecule id="Q63563-2"/>
    <property type="nucleotide sequence ID" value="NM_013040.2"/>
</dbReference>
<dbReference type="RefSeq" id="XP_038963045.1">
    <molecule id="Q63563-1"/>
    <property type="nucleotide sequence ID" value="XM_039107117.2"/>
</dbReference>
<dbReference type="RefSeq" id="XP_038963047.1">
    <molecule id="Q63563-2"/>
    <property type="nucleotide sequence ID" value="XM_039107119.2"/>
</dbReference>
<dbReference type="RefSeq" id="XP_038963048.1">
    <molecule id="Q63563-2"/>
    <property type="nucleotide sequence ID" value="XM_039107120.2"/>
</dbReference>
<dbReference type="PDB" id="7MIT">
    <property type="method" value="EM"/>
    <property type="resolution" value="3.40 A"/>
    <property type="chains" value="E=1-1541"/>
</dbReference>
<dbReference type="PDB" id="7MJO">
    <property type="method" value="EM"/>
    <property type="resolution" value="4.00 A"/>
    <property type="chains" value="E/G=1-1541"/>
</dbReference>
<dbReference type="PDB" id="7MJP">
    <property type="method" value="EM"/>
    <property type="resolution" value="4.20 A"/>
    <property type="chains" value="E=1-1541"/>
</dbReference>
<dbReference type="PDB" id="7MJQ">
    <property type="method" value="EM"/>
    <property type="resolution" value="4.20 A"/>
    <property type="chains" value="E/G=1-1541"/>
</dbReference>
<dbReference type="PDB" id="7VLR">
    <property type="method" value="EM"/>
    <property type="resolution" value="3.40 A"/>
    <property type="chains" value="A=1-1541"/>
</dbReference>
<dbReference type="PDB" id="7VLS">
    <property type="method" value="EM"/>
    <property type="resolution" value="3.30 A"/>
    <property type="chains" value="A=1-1541"/>
</dbReference>
<dbReference type="PDB" id="7VLT">
    <property type="method" value="EM"/>
    <property type="resolution" value="3.10 A"/>
    <property type="chains" value="A=1-1541"/>
</dbReference>
<dbReference type="PDB" id="7VLU">
    <property type="method" value="EM"/>
    <property type="resolution" value="3.30 A"/>
    <property type="chains" value="A=1-1545"/>
</dbReference>
<dbReference type="PDB" id="7Y1J">
    <property type="method" value="EM"/>
    <property type="resolution" value="3.00 A"/>
    <property type="chains" value="A=1-1545"/>
</dbReference>
<dbReference type="PDB" id="7Y1K">
    <property type="method" value="EM"/>
    <property type="resolution" value="3.80 A"/>
    <property type="chains" value="A=1-1545"/>
</dbReference>
<dbReference type="PDB" id="7Y1L">
    <property type="method" value="EM"/>
    <property type="resolution" value="3.73 A"/>
    <property type="chains" value="A=1-1541"/>
</dbReference>
<dbReference type="PDB" id="7Y1M">
    <property type="method" value="EM"/>
    <property type="resolution" value="3.57 A"/>
    <property type="chains" value="A=1-1541"/>
</dbReference>
<dbReference type="PDB" id="7Y1N">
    <property type="method" value="EM"/>
    <property type="resolution" value="3.61 A"/>
    <property type="chains" value="A=1-1541"/>
</dbReference>
<dbReference type="PDBsum" id="7MIT"/>
<dbReference type="PDBsum" id="7MJO"/>
<dbReference type="PDBsum" id="7MJP"/>
<dbReference type="PDBsum" id="7MJQ"/>
<dbReference type="PDBsum" id="7VLR"/>
<dbReference type="PDBsum" id="7VLS"/>
<dbReference type="PDBsum" id="7VLT"/>
<dbReference type="PDBsum" id="7VLU"/>
<dbReference type="PDBsum" id="7Y1J"/>
<dbReference type="PDBsum" id="7Y1K"/>
<dbReference type="PDBsum" id="7Y1L"/>
<dbReference type="PDBsum" id="7Y1M"/>
<dbReference type="PDBsum" id="7Y1N"/>
<dbReference type="EMDB" id="EMD-23864"/>
<dbReference type="EMDB" id="EMD-23880"/>
<dbReference type="EMDB" id="EMD-23881"/>
<dbReference type="EMDB" id="EMD-23882"/>
<dbReference type="EMDB" id="EMD-32024"/>
<dbReference type="EMDB" id="EMD-32025"/>
<dbReference type="EMDB" id="EMD-32026"/>
<dbReference type="EMDB" id="EMD-32027"/>
<dbReference type="EMDB" id="EMD-33563"/>
<dbReference type="EMDB" id="EMD-33564"/>
<dbReference type="EMDB" id="EMD-33565"/>
<dbReference type="EMDB" id="EMD-33566"/>
<dbReference type="EMDB" id="EMD-33567"/>
<dbReference type="SMR" id="Q63563"/>
<dbReference type="ComplexPortal" id="CPX-181">
    <molecule id="Q63563-1"/>
    <property type="entry name" value="Inward rectifying potassium channel complex, Kir6.2-SUR2A"/>
</dbReference>
<dbReference type="ComplexPortal" id="CPX-185">
    <molecule id="Q63563-2"/>
    <property type="entry name" value="Inward rectifying potassium channel complex, Kir6.2-SUR2B"/>
</dbReference>
<dbReference type="FunCoup" id="Q63563">
    <property type="interactions" value="156"/>
</dbReference>
<dbReference type="IntAct" id="Q63563">
    <property type="interactions" value="1"/>
</dbReference>
<dbReference type="MINT" id="Q63563"/>
<dbReference type="STRING" id="10116.ENSRNOP00000052402"/>
<dbReference type="BindingDB" id="Q63563"/>
<dbReference type="ChEMBL" id="CHEMBL3244"/>
<dbReference type="GlyCosmos" id="Q63563">
    <property type="glycosylation" value="3 sites, No reported glycans"/>
</dbReference>
<dbReference type="GlyGen" id="Q63563">
    <property type="glycosylation" value="3 sites"/>
</dbReference>
<dbReference type="iPTMnet" id="Q63563"/>
<dbReference type="PhosphoSitePlus" id="Q63563"/>
<dbReference type="SwissPalm" id="Q63563"/>
<dbReference type="PaxDb" id="10116-ENSRNOP00000052402"/>
<dbReference type="ABCD" id="Q63563">
    <property type="antibodies" value="5 sequenced antibodies"/>
</dbReference>
<dbReference type="GeneID" id="25560"/>
<dbReference type="KEGG" id="rno:25560"/>
<dbReference type="AGR" id="RGD:3787"/>
<dbReference type="CTD" id="10060"/>
<dbReference type="RGD" id="3787">
    <property type="gene designation" value="Abcc9"/>
</dbReference>
<dbReference type="eggNOG" id="KOG0054">
    <property type="taxonomic scope" value="Eukaryota"/>
</dbReference>
<dbReference type="InParanoid" id="Q63563"/>
<dbReference type="PhylomeDB" id="Q63563"/>
<dbReference type="Reactome" id="R-RNO-1296025">
    <property type="pathway name" value="ATP sensitive Potassium channels"/>
</dbReference>
<dbReference type="Reactome" id="R-RNO-382556">
    <property type="pathway name" value="ABC-family proteins mediated transport"/>
</dbReference>
<dbReference type="Reactome" id="R-RNO-5578775">
    <property type="pathway name" value="Ion homeostasis"/>
</dbReference>
<dbReference type="PRO" id="PR:Q63563"/>
<dbReference type="Proteomes" id="UP000002494">
    <property type="component" value="Unplaced"/>
</dbReference>
<dbReference type="GO" id="GO:0001669">
    <property type="term" value="C:acrosomal vesicle"/>
    <property type="evidence" value="ECO:0000314"/>
    <property type="project" value="RGD"/>
</dbReference>
<dbReference type="GO" id="GO:0005737">
    <property type="term" value="C:cytoplasm"/>
    <property type="evidence" value="ECO:0000266"/>
    <property type="project" value="RGD"/>
</dbReference>
<dbReference type="GO" id="GO:0008282">
    <property type="term" value="C:inward rectifying potassium channel"/>
    <property type="evidence" value="ECO:0000314"/>
    <property type="project" value="BHF-UCL"/>
</dbReference>
<dbReference type="GO" id="GO:0016020">
    <property type="term" value="C:membrane"/>
    <property type="evidence" value="ECO:0000318"/>
    <property type="project" value="GO_Central"/>
</dbReference>
<dbReference type="GO" id="GO:0005739">
    <property type="term" value="C:mitochondrion"/>
    <property type="evidence" value="ECO:0000266"/>
    <property type="project" value="RGD"/>
</dbReference>
<dbReference type="GO" id="GO:0005886">
    <property type="term" value="C:plasma membrane"/>
    <property type="evidence" value="ECO:0000266"/>
    <property type="project" value="RGD"/>
</dbReference>
<dbReference type="GO" id="GO:0032991">
    <property type="term" value="C:protein-containing complex"/>
    <property type="evidence" value="ECO:0000266"/>
    <property type="project" value="RGD"/>
</dbReference>
<dbReference type="GO" id="GO:0042383">
    <property type="term" value="C:sarcolemma"/>
    <property type="evidence" value="ECO:0000266"/>
    <property type="project" value="RGD"/>
</dbReference>
<dbReference type="GO" id="GO:0030017">
    <property type="term" value="C:sarcomere"/>
    <property type="evidence" value="ECO:0000266"/>
    <property type="project" value="RGD"/>
</dbReference>
<dbReference type="GO" id="GO:0030315">
    <property type="term" value="C:T-tubule"/>
    <property type="evidence" value="ECO:0000314"/>
    <property type="project" value="RGD"/>
</dbReference>
<dbReference type="GO" id="GO:0140359">
    <property type="term" value="F:ABC-type transporter activity"/>
    <property type="evidence" value="ECO:0007669"/>
    <property type="project" value="InterPro"/>
</dbReference>
<dbReference type="GO" id="GO:0005524">
    <property type="term" value="F:ATP binding"/>
    <property type="evidence" value="ECO:0007669"/>
    <property type="project" value="UniProtKB-KW"/>
</dbReference>
<dbReference type="GO" id="GO:0016887">
    <property type="term" value="F:ATP hydrolysis activity"/>
    <property type="evidence" value="ECO:0007669"/>
    <property type="project" value="InterPro"/>
</dbReference>
<dbReference type="GO" id="GO:0019829">
    <property type="term" value="F:ATPase-coupled monoatomic cation transmembrane transporter activity"/>
    <property type="evidence" value="ECO:0000316"/>
    <property type="project" value="ARUK-UCL"/>
</dbReference>
<dbReference type="GO" id="GO:0042626">
    <property type="term" value="F:ATPase-coupled transmembrane transporter activity"/>
    <property type="evidence" value="ECO:0000266"/>
    <property type="project" value="RGD"/>
</dbReference>
<dbReference type="GO" id="GO:1901363">
    <property type="term" value="F:heterocyclic compound binding"/>
    <property type="evidence" value="ECO:0000353"/>
    <property type="project" value="RGD"/>
</dbReference>
<dbReference type="GO" id="GO:0042802">
    <property type="term" value="F:identical protein binding"/>
    <property type="evidence" value="ECO:0000353"/>
    <property type="project" value="IntAct"/>
</dbReference>
<dbReference type="GO" id="GO:0099104">
    <property type="term" value="F:potassium channel activator activity"/>
    <property type="evidence" value="ECO:0000315"/>
    <property type="project" value="ARUK-UCL"/>
</dbReference>
<dbReference type="GO" id="GO:0005267">
    <property type="term" value="F:potassium channel activity"/>
    <property type="evidence" value="ECO:0000266"/>
    <property type="project" value="RGD"/>
</dbReference>
<dbReference type="GO" id="GO:0015459">
    <property type="term" value="F:potassium channel regulator activity"/>
    <property type="evidence" value="ECO:0000314"/>
    <property type="project" value="BHF-UCL"/>
</dbReference>
<dbReference type="GO" id="GO:0044877">
    <property type="term" value="F:protein-containing complex binding"/>
    <property type="evidence" value="ECO:0000266"/>
    <property type="project" value="RGD"/>
</dbReference>
<dbReference type="GO" id="GO:0008281">
    <property type="term" value="F:sulfonylurea receptor activity"/>
    <property type="evidence" value="ECO:0000314"/>
    <property type="project" value="BHF-UCL"/>
</dbReference>
<dbReference type="GO" id="GO:0019905">
    <property type="term" value="F:syntaxin binding"/>
    <property type="evidence" value="ECO:0000353"/>
    <property type="project" value="RGD"/>
</dbReference>
<dbReference type="GO" id="GO:0044325">
    <property type="term" value="F:transmembrane transporter binding"/>
    <property type="evidence" value="ECO:0000266"/>
    <property type="project" value="RGD"/>
</dbReference>
<dbReference type="GO" id="GO:0001508">
    <property type="term" value="P:action potential"/>
    <property type="evidence" value="ECO:0000266"/>
    <property type="project" value="RGD"/>
</dbReference>
<dbReference type="GO" id="GO:0046034">
    <property type="term" value="P:ATP metabolic process"/>
    <property type="evidence" value="ECO:0000266"/>
    <property type="project" value="RGD"/>
</dbReference>
<dbReference type="GO" id="GO:0008015">
    <property type="term" value="P:blood circulation"/>
    <property type="evidence" value="ECO:0000266"/>
    <property type="project" value="RGD"/>
</dbReference>
<dbReference type="GO" id="GO:0001568">
    <property type="term" value="P:blood vessel development"/>
    <property type="evidence" value="ECO:0000266"/>
    <property type="project" value="RGD"/>
</dbReference>
<dbReference type="GO" id="GO:0097746">
    <property type="term" value="P:blood vessel diameter maintenance"/>
    <property type="evidence" value="ECO:0000266"/>
    <property type="project" value="RGD"/>
</dbReference>
<dbReference type="GO" id="GO:0061337">
    <property type="term" value="P:cardiac conduction"/>
    <property type="evidence" value="ECO:0000266"/>
    <property type="project" value="RGD"/>
</dbReference>
<dbReference type="GO" id="GO:0086003">
    <property type="term" value="P:cardiac muscle cell contraction"/>
    <property type="evidence" value="ECO:0000266"/>
    <property type="project" value="RGD"/>
</dbReference>
<dbReference type="GO" id="GO:0045333">
    <property type="term" value="P:cellular respiration"/>
    <property type="evidence" value="ECO:0000266"/>
    <property type="project" value="RGD"/>
</dbReference>
<dbReference type="GO" id="GO:0071318">
    <property type="term" value="P:cellular response to ATP"/>
    <property type="evidence" value="ECO:0000266"/>
    <property type="project" value="RGD"/>
</dbReference>
<dbReference type="GO" id="GO:0071277">
    <property type="term" value="P:cellular response to calcium ion"/>
    <property type="evidence" value="ECO:0000266"/>
    <property type="project" value="RGD"/>
</dbReference>
<dbReference type="GO" id="GO:0062197">
    <property type="term" value="P:cellular response to chemical stress"/>
    <property type="evidence" value="ECO:0000266"/>
    <property type="project" value="RGD"/>
</dbReference>
<dbReference type="GO" id="GO:0035865">
    <property type="term" value="P:cellular response to potassium ion"/>
    <property type="evidence" value="ECO:0000266"/>
    <property type="project" value="RGD"/>
</dbReference>
<dbReference type="GO" id="GO:0071466">
    <property type="term" value="P:cellular response to xenobiotic stimulus"/>
    <property type="evidence" value="ECO:0000266"/>
    <property type="project" value="RGD"/>
</dbReference>
<dbReference type="GO" id="GO:0072359">
    <property type="term" value="P:circulatory system development"/>
    <property type="evidence" value="ECO:0000266"/>
    <property type="project" value="RGD"/>
</dbReference>
<dbReference type="GO" id="GO:0060976">
    <property type="term" value="P:coronary vasculature development"/>
    <property type="evidence" value="ECO:0000266"/>
    <property type="project" value="RGD"/>
</dbReference>
<dbReference type="GO" id="GO:0051607">
    <property type="term" value="P:defense response to virus"/>
    <property type="evidence" value="ECO:0000266"/>
    <property type="project" value="RGD"/>
</dbReference>
<dbReference type="GO" id="GO:0019395">
    <property type="term" value="P:fatty acid oxidation"/>
    <property type="evidence" value="ECO:0000266"/>
    <property type="project" value="RGD"/>
</dbReference>
<dbReference type="GO" id="GO:0048144">
    <property type="term" value="P:fibroblast proliferation"/>
    <property type="evidence" value="ECO:0000266"/>
    <property type="project" value="RGD"/>
</dbReference>
<dbReference type="GO" id="GO:0010467">
    <property type="term" value="P:gene expression"/>
    <property type="evidence" value="ECO:0000266"/>
    <property type="project" value="RGD"/>
</dbReference>
<dbReference type="GO" id="GO:0007507">
    <property type="term" value="P:heart development"/>
    <property type="evidence" value="ECO:0000266"/>
    <property type="project" value="RGD"/>
</dbReference>
<dbReference type="GO" id="GO:0003007">
    <property type="term" value="P:heart morphogenesis"/>
    <property type="evidence" value="ECO:0000266"/>
    <property type="project" value="RGD"/>
</dbReference>
<dbReference type="GO" id="GO:0098662">
    <property type="term" value="P:inorganic cation transmembrane transport"/>
    <property type="evidence" value="ECO:0000316"/>
    <property type="project" value="ARUK-UCL"/>
</dbReference>
<dbReference type="GO" id="GO:0000165">
    <property type="term" value="P:MAPK cascade"/>
    <property type="evidence" value="ECO:0000266"/>
    <property type="project" value="RGD"/>
</dbReference>
<dbReference type="GO" id="GO:0007005">
    <property type="term" value="P:mitochondrion organization"/>
    <property type="evidence" value="ECO:0000266"/>
    <property type="project" value="RGD"/>
</dbReference>
<dbReference type="GO" id="GO:0098655">
    <property type="term" value="P:monoatomic cation transmembrane transport"/>
    <property type="evidence" value="ECO:0000315"/>
    <property type="project" value="ARUK-UCL"/>
</dbReference>
<dbReference type="GO" id="GO:0043066">
    <property type="term" value="P:negative regulation of apoptotic process"/>
    <property type="evidence" value="ECO:0000266"/>
    <property type="project" value="RGD"/>
</dbReference>
<dbReference type="GO" id="GO:0045776">
    <property type="term" value="P:negative regulation of blood pressure"/>
    <property type="evidence" value="ECO:0000266"/>
    <property type="project" value="RGD"/>
</dbReference>
<dbReference type="GO" id="GO:0072592">
    <property type="term" value="P:oxygen metabolic process"/>
    <property type="evidence" value="ECO:0000266"/>
    <property type="project" value="RGD"/>
</dbReference>
<dbReference type="GO" id="GO:1990573">
    <property type="term" value="P:potassium ion import across plasma membrane"/>
    <property type="evidence" value="ECO:0000314"/>
    <property type="project" value="BHF-UCL"/>
</dbReference>
<dbReference type="GO" id="GO:0071805">
    <property type="term" value="P:potassium ion transmembrane transport"/>
    <property type="evidence" value="ECO:0000314"/>
    <property type="project" value="RGD"/>
</dbReference>
<dbReference type="GO" id="GO:0006813">
    <property type="term" value="P:potassium ion transport"/>
    <property type="evidence" value="ECO:0000314"/>
    <property type="project" value="RGD"/>
</dbReference>
<dbReference type="GO" id="GO:1903409">
    <property type="term" value="P:reactive oxygen species biosynthetic process"/>
    <property type="evidence" value="ECO:0000266"/>
    <property type="project" value="RGD"/>
</dbReference>
<dbReference type="GO" id="GO:0008217">
    <property type="term" value="P:regulation of blood pressure"/>
    <property type="evidence" value="ECO:0000266"/>
    <property type="project" value="RGD"/>
</dbReference>
<dbReference type="GO" id="GO:0042391">
    <property type="term" value="P:regulation of membrane potential"/>
    <property type="evidence" value="ECO:0000266"/>
    <property type="project" value="RGD"/>
</dbReference>
<dbReference type="GO" id="GO:1901379">
    <property type="term" value="P:regulation of potassium ion transmembrane transport"/>
    <property type="evidence" value="ECO:0000266"/>
    <property type="project" value="RGD"/>
</dbReference>
<dbReference type="GO" id="GO:0006357">
    <property type="term" value="P:regulation of transcription by RNA polymerase II"/>
    <property type="evidence" value="ECO:0000266"/>
    <property type="project" value="RGD"/>
</dbReference>
<dbReference type="GO" id="GO:0014823">
    <property type="term" value="P:response to activity"/>
    <property type="evidence" value="ECO:0000266"/>
    <property type="project" value="RGD"/>
</dbReference>
<dbReference type="GO" id="GO:0033198">
    <property type="term" value="P:response to ATP"/>
    <property type="evidence" value="ECO:0000316"/>
    <property type="project" value="ARUK-UCL"/>
</dbReference>
<dbReference type="GO" id="GO:0036293">
    <property type="term" value="P:response to decreased oxygen levels"/>
    <property type="evidence" value="ECO:0000266"/>
    <property type="project" value="RGD"/>
</dbReference>
<dbReference type="GO" id="GO:0043627">
    <property type="term" value="P:response to estrogen"/>
    <property type="evidence" value="ECO:0000266"/>
    <property type="project" value="RGD"/>
</dbReference>
<dbReference type="GO" id="GO:0042542">
    <property type="term" value="P:response to hydrogen peroxide"/>
    <property type="evidence" value="ECO:0000266"/>
    <property type="project" value="RGD"/>
</dbReference>
<dbReference type="GO" id="GO:1904880">
    <property type="term" value="P:response to hydrogen sulfide"/>
    <property type="evidence" value="ECO:0000266"/>
    <property type="project" value="RGD"/>
</dbReference>
<dbReference type="GO" id="GO:0001666">
    <property type="term" value="P:response to hypoxia"/>
    <property type="evidence" value="ECO:0000266"/>
    <property type="project" value="RGD"/>
</dbReference>
<dbReference type="GO" id="GO:0070482">
    <property type="term" value="P:response to oxygen levels"/>
    <property type="evidence" value="ECO:0000266"/>
    <property type="project" value="RGD"/>
</dbReference>
<dbReference type="GO" id="GO:1901652">
    <property type="term" value="P:response to peptide"/>
    <property type="evidence" value="ECO:0000266"/>
    <property type="project" value="RGD"/>
</dbReference>
<dbReference type="GO" id="GO:0035864">
    <property type="term" value="P:response to potassium ion"/>
    <property type="evidence" value="ECO:0000266"/>
    <property type="project" value="RGD"/>
</dbReference>
<dbReference type="GO" id="GO:0006950">
    <property type="term" value="P:response to stress"/>
    <property type="evidence" value="ECO:0000266"/>
    <property type="project" value="RGD"/>
</dbReference>
<dbReference type="GO" id="GO:0009410">
    <property type="term" value="P:response to xenobiotic stimulus"/>
    <property type="evidence" value="ECO:0000270"/>
    <property type="project" value="RGD"/>
</dbReference>
<dbReference type="GO" id="GO:0007519">
    <property type="term" value="P:skeletal muscle tissue development"/>
    <property type="evidence" value="ECO:0000266"/>
    <property type="project" value="RGD"/>
</dbReference>
<dbReference type="GO" id="GO:0006932">
    <property type="term" value="P:substrate-dependent cell migration, cell contraction"/>
    <property type="evidence" value="ECO:0000303"/>
    <property type="project" value="RGD"/>
</dbReference>
<dbReference type="GO" id="GO:0055085">
    <property type="term" value="P:transmembrane transport"/>
    <property type="evidence" value="ECO:0000318"/>
    <property type="project" value="GO_Central"/>
</dbReference>
<dbReference type="GO" id="GO:0003018">
    <property type="term" value="P:vascular process in circulatory system"/>
    <property type="evidence" value="ECO:0000266"/>
    <property type="project" value="RGD"/>
</dbReference>
<dbReference type="GO" id="GO:0042311">
    <property type="term" value="P:vasodilation"/>
    <property type="evidence" value="ECO:0000266"/>
    <property type="project" value="RGD"/>
</dbReference>
<dbReference type="CDD" id="cd18591">
    <property type="entry name" value="ABC_6TM_SUR1_D1_like"/>
    <property type="match status" value="1"/>
</dbReference>
<dbReference type="CDD" id="cd18602">
    <property type="entry name" value="ABC_6TM_SUR1_D2_like"/>
    <property type="match status" value="1"/>
</dbReference>
<dbReference type="CDD" id="cd03290">
    <property type="entry name" value="ABCC_SUR1_N"/>
    <property type="match status" value="1"/>
</dbReference>
<dbReference type="CDD" id="cd03288">
    <property type="entry name" value="ABCC_SUR2"/>
    <property type="match status" value="1"/>
</dbReference>
<dbReference type="FunFam" id="1.20.1560.10:FF:000005">
    <property type="entry name" value="ATP-binding cassette, sub-family C (CFTR/MRP), member 9"/>
    <property type="match status" value="1"/>
</dbReference>
<dbReference type="FunFam" id="1.20.1560.10:FF:000006">
    <property type="entry name" value="ATP-binding cassette, sub-family C (CFTR/MRP), member 9"/>
    <property type="match status" value="1"/>
</dbReference>
<dbReference type="FunFam" id="3.40.50.300:FF:000197">
    <property type="entry name" value="ATP-binding cassette, sub-family C (CFTR/MRP), member 9"/>
    <property type="match status" value="1"/>
</dbReference>
<dbReference type="FunFam" id="3.40.50.300:FF:000394">
    <property type="entry name" value="ATP-binding cassette, sub-family C (CFTR/MRP), member 9"/>
    <property type="match status" value="1"/>
</dbReference>
<dbReference type="Gene3D" id="1.20.1560.10">
    <property type="entry name" value="ABC transporter type 1, transmembrane domain"/>
    <property type="match status" value="2"/>
</dbReference>
<dbReference type="Gene3D" id="3.40.50.300">
    <property type="entry name" value="P-loop containing nucleotide triphosphate hydrolases"/>
    <property type="match status" value="2"/>
</dbReference>
<dbReference type="InterPro" id="IPR003593">
    <property type="entry name" value="AAA+_ATPase"/>
</dbReference>
<dbReference type="InterPro" id="IPR011527">
    <property type="entry name" value="ABC1_TM_dom"/>
</dbReference>
<dbReference type="InterPro" id="IPR036640">
    <property type="entry name" value="ABC1_TM_sf"/>
</dbReference>
<dbReference type="InterPro" id="IPR003439">
    <property type="entry name" value="ABC_transporter-like_ATP-bd"/>
</dbReference>
<dbReference type="InterPro" id="IPR017871">
    <property type="entry name" value="ABC_transporter-like_CS"/>
</dbReference>
<dbReference type="InterPro" id="IPR050173">
    <property type="entry name" value="ABC_transporter_C-like"/>
</dbReference>
<dbReference type="InterPro" id="IPR000388">
    <property type="entry name" value="ABCC8/9"/>
</dbReference>
<dbReference type="InterPro" id="IPR001475">
    <property type="entry name" value="ABCC9"/>
</dbReference>
<dbReference type="InterPro" id="IPR047080">
    <property type="entry name" value="ABCC9_ATP-bd_dom1"/>
</dbReference>
<dbReference type="InterPro" id="IPR027417">
    <property type="entry name" value="P-loop_NTPase"/>
</dbReference>
<dbReference type="PANTHER" id="PTHR24223">
    <property type="entry name" value="ATP-BINDING CASSETTE SUB-FAMILY C"/>
    <property type="match status" value="1"/>
</dbReference>
<dbReference type="PANTHER" id="PTHR24223:SF173">
    <property type="entry name" value="ATP-BINDING CASSETTE SUB-FAMILY C MEMBER 9"/>
    <property type="match status" value="1"/>
</dbReference>
<dbReference type="Pfam" id="PF00664">
    <property type="entry name" value="ABC_membrane"/>
    <property type="match status" value="2"/>
</dbReference>
<dbReference type="Pfam" id="PF00005">
    <property type="entry name" value="ABC_tran"/>
    <property type="match status" value="2"/>
</dbReference>
<dbReference type="PRINTS" id="PR01094">
    <property type="entry name" value="SULFNYLUR2"/>
</dbReference>
<dbReference type="PRINTS" id="PR01092">
    <property type="entry name" value="SULFNYLUREAR"/>
</dbReference>
<dbReference type="SMART" id="SM00382">
    <property type="entry name" value="AAA"/>
    <property type="match status" value="2"/>
</dbReference>
<dbReference type="SUPFAM" id="SSF90123">
    <property type="entry name" value="ABC transporter transmembrane region"/>
    <property type="match status" value="2"/>
</dbReference>
<dbReference type="SUPFAM" id="SSF52540">
    <property type="entry name" value="P-loop containing nucleoside triphosphate hydrolases"/>
    <property type="match status" value="2"/>
</dbReference>
<dbReference type="PROSITE" id="PS50929">
    <property type="entry name" value="ABC_TM1F"/>
    <property type="match status" value="2"/>
</dbReference>
<dbReference type="PROSITE" id="PS00211">
    <property type="entry name" value="ABC_TRANSPORTER_1"/>
    <property type="match status" value="2"/>
</dbReference>
<dbReference type="PROSITE" id="PS50893">
    <property type="entry name" value="ABC_TRANSPORTER_2"/>
    <property type="match status" value="2"/>
</dbReference>
<proteinExistence type="evidence at protein level"/>
<reference key="1">
    <citation type="journal article" date="1996" name="Neuron">
        <title>A family of sulfonylurea receptors determines the pharmacological properties of ATP-sensitive K+ channels.</title>
        <authorList>
            <person name="Inagaki N."/>
            <person name="Gonoi T."/>
            <person name="Clement G."/>
            <person name="Wang C."/>
            <person name="Aguilar-Bryan L."/>
            <person name="Bryan J."/>
            <person name="Seino S."/>
        </authorList>
    </citation>
    <scope>NUCLEOTIDE SEQUENCE [MRNA] (ISOFORM SUR2A)</scope>
    <source>
        <tissue>Brain</tissue>
    </source>
</reference>
<reference key="2">
    <citation type="submission" date="1998-08" db="EMBL/GenBank/DDBJ databases">
        <title>Rat sulfonylurea receptor 2B, alternatively spliced product.</title>
        <authorList>
            <person name="Furuta H."/>
            <person name="Inagaki N."/>
            <person name="Gonoi T."/>
            <person name="Chien E."/>
            <person name="Seino S."/>
            <person name="Bell G.I."/>
        </authorList>
    </citation>
    <scope>NUCLEOTIDE SEQUENCE [MRNA] (ISOFORM SUR2B)</scope>
    <source>
        <strain>Sprague-Dawley</strain>
    </source>
</reference>
<reference key="3">
    <citation type="submission" date="1997-08" db="EMBL/GenBank/DDBJ databases">
        <authorList>
            <person name="Tanemoto M."/>
            <person name="Abe T."/>
            <person name="Hebert S.C."/>
        </authorList>
    </citation>
    <scope>NUCLEOTIDE SEQUENCE [MRNA] (ISOFORM SUR2B)</scope>
</reference>
<gene>
    <name type="primary">Abcc9</name>
    <name type="synonym">Sur2</name>
</gene>